<gene>
    <name evidence="4" type="primary">NSUN5</name>
    <name evidence="5" type="synonym">TRM4h</name>
    <name evidence="6" type="ordered locus">At5g26180</name>
    <name evidence="7" type="ORF">T19G15.30</name>
</gene>
<comment type="function">
    <text evidence="3">S-adenosyl-L-methionine-dependent methyltransferase that specifically methylates the C(5) position of cytosine 2268 (m5C2268) in 25S rRNA.</text>
</comment>
<comment type="catalytic activity">
    <reaction evidence="3">
        <text>a cytidine in 25S rRNA + S-adenosyl-L-methionine = a 5-methylcytidine in 25S rRNA + S-adenosyl-L-homocysteine + H(+)</text>
        <dbReference type="Rhea" id="RHEA:47780"/>
        <dbReference type="Rhea" id="RHEA-COMP:11911"/>
        <dbReference type="Rhea" id="RHEA-COMP:11912"/>
        <dbReference type="ChEBI" id="CHEBI:15378"/>
        <dbReference type="ChEBI" id="CHEBI:57856"/>
        <dbReference type="ChEBI" id="CHEBI:59789"/>
        <dbReference type="ChEBI" id="CHEBI:74483"/>
        <dbReference type="ChEBI" id="CHEBI:82748"/>
    </reaction>
</comment>
<comment type="disruption phenotype">
    <text evidence="3">Reduced methylation of the C(5) position of cytosine 2268 (m5C2268) in 25S rRNA.</text>
</comment>
<comment type="similarity">
    <text evidence="1">Belongs to the class I-like SAM-binding methyltransferase superfamily. RsmB/NOP family.</text>
</comment>
<dbReference type="EC" id="2.1.1.-" evidence="1 3"/>
<dbReference type="EMBL" id="AC005965">
    <property type="status" value="NOT_ANNOTATED_CDS"/>
    <property type="molecule type" value="Genomic_DNA"/>
</dbReference>
<dbReference type="EMBL" id="CP002688">
    <property type="protein sequence ID" value="AED93533.1"/>
    <property type="molecule type" value="Genomic_DNA"/>
</dbReference>
<dbReference type="EMBL" id="CP002688">
    <property type="protein sequence ID" value="AED93534.1"/>
    <property type="molecule type" value="Genomic_DNA"/>
</dbReference>
<dbReference type="EMBL" id="CP002688">
    <property type="protein sequence ID" value="ANM70298.1"/>
    <property type="molecule type" value="Genomic_DNA"/>
</dbReference>
<dbReference type="EMBL" id="CP002688">
    <property type="protein sequence ID" value="ANM70299.1"/>
    <property type="molecule type" value="Genomic_DNA"/>
</dbReference>
<dbReference type="EMBL" id="CP002688">
    <property type="protein sequence ID" value="ANM70300.1"/>
    <property type="molecule type" value="Genomic_DNA"/>
</dbReference>
<dbReference type="EMBL" id="AK117681">
    <property type="protein sequence ID" value="BAC42333.1"/>
    <property type="molecule type" value="mRNA"/>
</dbReference>
<dbReference type="EMBL" id="BT008590">
    <property type="protein sequence ID" value="AAP40417.1"/>
    <property type="molecule type" value="mRNA"/>
</dbReference>
<dbReference type="RefSeq" id="NP_001331920.1">
    <property type="nucleotide sequence ID" value="NM_001343965.1"/>
</dbReference>
<dbReference type="RefSeq" id="NP_001331921.1">
    <property type="nucleotide sequence ID" value="NM_001343967.1"/>
</dbReference>
<dbReference type="RefSeq" id="NP_001331922.1">
    <property type="nucleotide sequence ID" value="NM_001343966.1"/>
</dbReference>
<dbReference type="RefSeq" id="NP_197990.2">
    <property type="nucleotide sequence ID" value="NM_122519.3"/>
</dbReference>
<dbReference type="RefSeq" id="NP_851079.1">
    <property type="nucleotide sequence ID" value="NM_180748.2"/>
</dbReference>
<dbReference type="SMR" id="Q8GYE8"/>
<dbReference type="FunCoup" id="Q8GYE8">
    <property type="interactions" value="3536"/>
</dbReference>
<dbReference type="STRING" id="3702.Q8GYE8"/>
<dbReference type="PaxDb" id="3702-AT5G26180.2"/>
<dbReference type="ProteomicsDB" id="183490"/>
<dbReference type="EnsemblPlants" id="AT5G26180.1">
    <property type="protein sequence ID" value="AT5G26180.1"/>
    <property type="gene ID" value="AT5G26180"/>
</dbReference>
<dbReference type="EnsemblPlants" id="AT5G26180.2">
    <property type="protein sequence ID" value="AT5G26180.2"/>
    <property type="gene ID" value="AT5G26180"/>
</dbReference>
<dbReference type="EnsemblPlants" id="AT5G26180.3">
    <property type="protein sequence ID" value="AT5G26180.3"/>
    <property type="gene ID" value="AT5G26180"/>
</dbReference>
<dbReference type="EnsemblPlants" id="AT5G26180.4">
    <property type="protein sequence ID" value="AT5G26180.4"/>
    <property type="gene ID" value="AT5G26180"/>
</dbReference>
<dbReference type="EnsemblPlants" id="AT5G26180.5">
    <property type="protein sequence ID" value="AT5G26180.5"/>
    <property type="gene ID" value="AT5G26180"/>
</dbReference>
<dbReference type="GeneID" id="832687"/>
<dbReference type="Gramene" id="AT5G26180.1">
    <property type="protein sequence ID" value="AT5G26180.1"/>
    <property type="gene ID" value="AT5G26180"/>
</dbReference>
<dbReference type="Gramene" id="AT5G26180.2">
    <property type="protein sequence ID" value="AT5G26180.2"/>
    <property type="gene ID" value="AT5G26180"/>
</dbReference>
<dbReference type="Gramene" id="AT5G26180.3">
    <property type="protein sequence ID" value="AT5G26180.3"/>
    <property type="gene ID" value="AT5G26180"/>
</dbReference>
<dbReference type="Gramene" id="AT5G26180.4">
    <property type="protein sequence ID" value="AT5G26180.4"/>
    <property type="gene ID" value="AT5G26180"/>
</dbReference>
<dbReference type="Gramene" id="AT5G26180.5">
    <property type="protein sequence ID" value="AT5G26180.5"/>
    <property type="gene ID" value="AT5G26180"/>
</dbReference>
<dbReference type="KEGG" id="ath:AT5G26180"/>
<dbReference type="Araport" id="AT5G26180"/>
<dbReference type="TAIR" id="AT5G26180">
    <property type="gene designation" value="NSUN5"/>
</dbReference>
<dbReference type="eggNOG" id="KOG2360">
    <property type="taxonomic scope" value="Eukaryota"/>
</dbReference>
<dbReference type="HOGENOM" id="CLU_005316_7_4_1"/>
<dbReference type="InParanoid" id="Q8GYE8"/>
<dbReference type="OMA" id="SFKSRIY"/>
<dbReference type="PhylomeDB" id="Q8GYE8"/>
<dbReference type="PRO" id="PR:Q8GYE8"/>
<dbReference type="Proteomes" id="UP000006548">
    <property type="component" value="Chromosome 5"/>
</dbReference>
<dbReference type="ExpressionAtlas" id="Q8GYE8">
    <property type="expression patterns" value="baseline and differential"/>
</dbReference>
<dbReference type="GO" id="GO:0003729">
    <property type="term" value="F:mRNA binding"/>
    <property type="evidence" value="ECO:0000314"/>
    <property type="project" value="TAIR"/>
</dbReference>
<dbReference type="GO" id="GO:0008173">
    <property type="term" value="F:RNA methyltransferase activity"/>
    <property type="evidence" value="ECO:0007669"/>
    <property type="project" value="InterPro"/>
</dbReference>
<dbReference type="GO" id="GO:0001510">
    <property type="term" value="P:RNA methylation"/>
    <property type="evidence" value="ECO:0007669"/>
    <property type="project" value="InterPro"/>
</dbReference>
<dbReference type="GO" id="GO:0006364">
    <property type="term" value="P:rRNA processing"/>
    <property type="evidence" value="ECO:0007669"/>
    <property type="project" value="UniProtKB-KW"/>
</dbReference>
<dbReference type="CDD" id="cd02440">
    <property type="entry name" value="AdoMet_MTases"/>
    <property type="match status" value="1"/>
</dbReference>
<dbReference type="FunFam" id="3.40.50.150:FF:000164">
    <property type="entry name" value="Methyltransferase NSUN5, putative"/>
    <property type="match status" value="1"/>
</dbReference>
<dbReference type="FunFam" id="3.30.70.1170:FF:000007">
    <property type="entry name" value="Putative 28S rRNA (Cytosine-C(5))-methyltransferase"/>
    <property type="match status" value="1"/>
</dbReference>
<dbReference type="Gene3D" id="3.30.70.1170">
    <property type="entry name" value="Sun protein, domain 3"/>
    <property type="match status" value="1"/>
</dbReference>
<dbReference type="Gene3D" id="3.40.50.150">
    <property type="entry name" value="Vaccinia Virus protein VP39"/>
    <property type="match status" value="1"/>
</dbReference>
<dbReference type="InterPro" id="IPR049560">
    <property type="entry name" value="MeTrfase_RsmB-F_NOP2_cat"/>
</dbReference>
<dbReference type="InterPro" id="IPR001678">
    <property type="entry name" value="MeTrfase_RsmB-F_NOP2_dom"/>
</dbReference>
<dbReference type="InterPro" id="IPR049561">
    <property type="entry name" value="NSUN5_7_fdxn-like"/>
</dbReference>
<dbReference type="InterPro" id="IPR048889">
    <property type="entry name" value="NSUN5_RCM1_N"/>
</dbReference>
<dbReference type="InterPro" id="IPR023267">
    <property type="entry name" value="RCMT"/>
</dbReference>
<dbReference type="InterPro" id="IPR029063">
    <property type="entry name" value="SAM-dependent_MTases_sf"/>
</dbReference>
<dbReference type="PANTHER" id="PTHR22807:SF4">
    <property type="entry name" value="28S RRNA (CYTOSINE-C(5))-METHYLTRANSFERASE"/>
    <property type="match status" value="1"/>
</dbReference>
<dbReference type="PANTHER" id="PTHR22807">
    <property type="entry name" value="NOP2 YEAST -RELATED NOL1/NOP2/FMU SUN DOMAIN-CONTAINING"/>
    <property type="match status" value="1"/>
</dbReference>
<dbReference type="Pfam" id="PF01189">
    <property type="entry name" value="Methyltr_RsmB-F"/>
    <property type="match status" value="1"/>
</dbReference>
<dbReference type="Pfam" id="PF21148">
    <property type="entry name" value="NSUN5_fdxn-like"/>
    <property type="match status" value="1"/>
</dbReference>
<dbReference type="Pfam" id="PF21153">
    <property type="entry name" value="NSUN5_N"/>
    <property type="match status" value="1"/>
</dbReference>
<dbReference type="PRINTS" id="PR02008">
    <property type="entry name" value="RCMTFAMILY"/>
</dbReference>
<dbReference type="SUPFAM" id="SSF53335">
    <property type="entry name" value="S-adenosyl-L-methionine-dependent methyltransferases"/>
    <property type="match status" value="1"/>
</dbReference>
<dbReference type="PROSITE" id="PS51686">
    <property type="entry name" value="SAM_MT_RSMB_NOP"/>
    <property type="match status" value="1"/>
</dbReference>
<name>NSUN5_ARATH</name>
<sequence>MVARRNKPKAPLVKHRFSGGDSHKPKPPPATKQPFSGVESHKPKTSPATKQKFSGVESHKPKTPPGKQRFSGAESRKPKTPPATKQKFSSLERSALYARREAANILRTVLRGDAERRAVASIKSLVLSPSVRNKRGTFALVCETLKYLTVIKDVLDIANVLNSKWKRQEPLVFIVCYDILFGKDTPSIGDAEKFLMRHKEALLSGLATLLVRKKVDSVDQLLGSKLTGHLKPRYVRVNTLKMDVDSAVQELEKHYTVQKDETVPDLLVLPPGSDLHAHRLVANGRIFLQGKASSMVAAALQPQAGWEVLDACSAPGNKTIHLAALMEGQGKIIACELNEERVKRLEHTIKLSGASNIEVCHGDFLGLNPKDPSFAKIRAILLDPSCSGSGTITDRLDHLLPSHSEDNNMNYDSMRLHKLAVFQKKALAHALSFPKVERVVYSTCSIYQIENEDVVSSVLPLASSLGFKLATPFPQWQRRGLPVFAGSEHLLRMDPVEDKEGFFIALFVRANKLDNPKSSELPDRVCRRRPKERTMQLHPYLCPKMFRAWSGTLHRLKTRFLLSRNGC</sequence>
<feature type="chain" id="PRO_0000448894" description="25S rRNA (cytosine-C(5))-methyltransferase NSUN5">
    <location>
        <begin position="1"/>
        <end position="567"/>
    </location>
</feature>
<feature type="region of interest" description="Disordered" evidence="2">
    <location>
        <begin position="1"/>
        <end position="88"/>
    </location>
</feature>
<feature type="compositionally biased region" description="Basic residues" evidence="2">
    <location>
        <begin position="1"/>
        <end position="17"/>
    </location>
</feature>
<feature type="active site" description="Nucleophile" evidence="1">
    <location>
        <position position="444"/>
    </location>
</feature>
<feature type="binding site" evidence="1">
    <location>
        <begin position="312"/>
        <end position="318"/>
    </location>
    <ligand>
        <name>S-adenosyl-L-methionine</name>
        <dbReference type="ChEBI" id="CHEBI:59789"/>
    </ligand>
</feature>
<feature type="binding site" evidence="1">
    <location>
        <position position="336"/>
    </location>
    <ligand>
        <name>S-adenosyl-L-methionine</name>
        <dbReference type="ChEBI" id="CHEBI:59789"/>
    </ligand>
</feature>
<feature type="binding site" evidence="1">
    <location>
        <position position="363"/>
    </location>
    <ligand>
        <name>S-adenosyl-L-methionine</name>
        <dbReference type="ChEBI" id="CHEBI:59789"/>
    </ligand>
</feature>
<feature type="binding site" evidence="1">
    <location>
        <position position="383"/>
    </location>
    <ligand>
        <name>S-adenosyl-L-methionine</name>
        <dbReference type="ChEBI" id="CHEBI:59789"/>
    </ligand>
</feature>
<keyword id="KW-0489">Methyltransferase</keyword>
<keyword id="KW-1185">Reference proteome</keyword>
<keyword id="KW-0694">RNA-binding</keyword>
<keyword id="KW-0698">rRNA processing</keyword>
<keyword id="KW-0949">S-adenosyl-L-methionine</keyword>
<keyword id="KW-0808">Transferase</keyword>
<organism>
    <name type="scientific">Arabidopsis thaliana</name>
    <name type="common">Mouse-ear cress</name>
    <dbReference type="NCBI Taxonomy" id="3702"/>
    <lineage>
        <taxon>Eukaryota</taxon>
        <taxon>Viridiplantae</taxon>
        <taxon>Streptophyta</taxon>
        <taxon>Embryophyta</taxon>
        <taxon>Tracheophyta</taxon>
        <taxon>Spermatophyta</taxon>
        <taxon>Magnoliopsida</taxon>
        <taxon>eudicotyledons</taxon>
        <taxon>Gunneridae</taxon>
        <taxon>Pentapetalae</taxon>
        <taxon>rosids</taxon>
        <taxon>malvids</taxon>
        <taxon>Brassicales</taxon>
        <taxon>Brassicaceae</taxon>
        <taxon>Camelineae</taxon>
        <taxon>Arabidopsis</taxon>
    </lineage>
</organism>
<evidence type="ECO:0000255" key="1">
    <source>
        <dbReference type="PROSITE-ProRule" id="PRU01023"/>
    </source>
</evidence>
<evidence type="ECO:0000256" key="2">
    <source>
        <dbReference type="SAM" id="MobiDB-lite"/>
    </source>
</evidence>
<evidence type="ECO:0000269" key="3">
    <source>
    </source>
</evidence>
<evidence type="ECO:0000303" key="4">
    <source>
    </source>
</evidence>
<evidence type="ECO:0000303" key="5">
    <source>
    </source>
</evidence>
<evidence type="ECO:0000312" key="6">
    <source>
        <dbReference type="Araport" id="AT5G26180"/>
    </source>
</evidence>
<evidence type="ECO:0000312" key="7">
    <source>
        <dbReference type="EMBL" id="AC005965"/>
    </source>
</evidence>
<reference key="1">
    <citation type="journal article" date="2000" name="Nature">
        <title>Sequence and analysis of chromosome 5 of the plant Arabidopsis thaliana.</title>
        <authorList>
            <person name="Tabata S."/>
            <person name="Kaneko T."/>
            <person name="Nakamura Y."/>
            <person name="Kotani H."/>
            <person name="Kato T."/>
            <person name="Asamizu E."/>
            <person name="Miyajima N."/>
            <person name="Sasamoto S."/>
            <person name="Kimura T."/>
            <person name="Hosouchi T."/>
            <person name="Kawashima K."/>
            <person name="Kohara M."/>
            <person name="Matsumoto M."/>
            <person name="Matsuno A."/>
            <person name="Muraki A."/>
            <person name="Nakayama S."/>
            <person name="Nakazaki N."/>
            <person name="Naruo K."/>
            <person name="Okumura S."/>
            <person name="Shinpo S."/>
            <person name="Takeuchi C."/>
            <person name="Wada T."/>
            <person name="Watanabe A."/>
            <person name="Yamada M."/>
            <person name="Yasuda M."/>
            <person name="Sato S."/>
            <person name="de la Bastide M."/>
            <person name="Huang E."/>
            <person name="Spiegel L."/>
            <person name="Gnoj L."/>
            <person name="O'Shaughnessy A."/>
            <person name="Preston R."/>
            <person name="Habermann K."/>
            <person name="Murray J."/>
            <person name="Johnson D."/>
            <person name="Rohlfing T."/>
            <person name="Nelson J."/>
            <person name="Stoneking T."/>
            <person name="Pepin K."/>
            <person name="Spieth J."/>
            <person name="Sekhon M."/>
            <person name="Armstrong J."/>
            <person name="Becker M."/>
            <person name="Belter E."/>
            <person name="Cordum H."/>
            <person name="Cordes M."/>
            <person name="Courtney L."/>
            <person name="Courtney W."/>
            <person name="Dante M."/>
            <person name="Du H."/>
            <person name="Edwards J."/>
            <person name="Fryman J."/>
            <person name="Haakensen B."/>
            <person name="Lamar E."/>
            <person name="Latreille P."/>
            <person name="Leonard S."/>
            <person name="Meyer R."/>
            <person name="Mulvaney E."/>
            <person name="Ozersky P."/>
            <person name="Riley A."/>
            <person name="Strowmatt C."/>
            <person name="Wagner-McPherson C."/>
            <person name="Wollam A."/>
            <person name="Yoakum M."/>
            <person name="Bell M."/>
            <person name="Dedhia N."/>
            <person name="Parnell L."/>
            <person name="Shah R."/>
            <person name="Rodriguez M."/>
            <person name="Hoon See L."/>
            <person name="Vil D."/>
            <person name="Baker J."/>
            <person name="Kirchoff K."/>
            <person name="Toth K."/>
            <person name="King L."/>
            <person name="Bahret A."/>
            <person name="Miller B."/>
            <person name="Marra M.A."/>
            <person name="Martienssen R."/>
            <person name="McCombie W.R."/>
            <person name="Wilson R.K."/>
            <person name="Murphy G."/>
            <person name="Bancroft I."/>
            <person name="Volckaert G."/>
            <person name="Wambutt R."/>
            <person name="Duesterhoeft A."/>
            <person name="Stiekema W."/>
            <person name="Pohl T."/>
            <person name="Entian K.-D."/>
            <person name="Terryn N."/>
            <person name="Hartley N."/>
            <person name="Bent E."/>
            <person name="Johnson S."/>
            <person name="Langham S.-A."/>
            <person name="McCullagh B."/>
            <person name="Robben J."/>
            <person name="Grymonprez B."/>
            <person name="Zimmermann W."/>
            <person name="Ramsperger U."/>
            <person name="Wedler H."/>
            <person name="Balke K."/>
            <person name="Wedler E."/>
            <person name="Peters S."/>
            <person name="van Staveren M."/>
            <person name="Dirkse W."/>
            <person name="Mooijman P."/>
            <person name="Klein Lankhorst R."/>
            <person name="Weitzenegger T."/>
            <person name="Bothe G."/>
            <person name="Rose M."/>
            <person name="Hauf J."/>
            <person name="Berneiser S."/>
            <person name="Hempel S."/>
            <person name="Feldpausch M."/>
            <person name="Lamberth S."/>
            <person name="Villarroel R."/>
            <person name="Gielen J."/>
            <person name="Ardiles W."/>
            <person name="Bents O."/>
            <person name="Lemcke K."/>
            <person name="Kolesov G."/>
            <person name="Mayer K.F.X."/>
            <person name="Rudd S."/>
            <person name="Schoof H."/>
            <person name="Schueller C."/>
            <person name="Zaccaria P."/>
            <person name="Mewes H.-W."/>
            <person name="Bevan M."/>
            <person name="Fransz P.F."/>
        </authorList>
    </citation>
    <scope>NUCLEOTIDE SEQUENCE [LARGE SCALE GENOMIC DNA]</scope>
    <source>
        <strain>cv. Columbia</strain>
    </source>
</reference>
<reference key="2">
    <citation type="journal article" date="2017" name="Plant J.">
        <title>Araport11: a complete reannotation of the Arabidopsis thaliana reference genome.</title>
        <authorList>
            <person name="Cheng C.Y."/>
            <person name="Krishnakumar V."/>
            <person name="Chan A.P."/>
            <person name="Thibaud-Nissen F."/>
            <person name="Schobel S."/>
            <person name="Town C.D."/>
        </authorList>
    </citation>
    <scope>GENOME REANNOTATION</scope>
    <source>
        <strain>cv. Columbia</strain>
    </source>
</reference>
<reference key="3">
    <citation type="journal article" date="2002" name="Science">
        <title>Functional annotation of a full-length Arabidopsis cDNA collection.</title>
        <authorList>
            <person name="Seki M."/>
            <person name="Narusaka M."/>
            <person name="Kamiya A."/>
            <person name="Ishida J."/>
            <person name="Satou M."/>
            <person name="Sakurai T."/>
            <person name="Nakajima M."/>
            <person name="Enju A."/>
            <person name="Akiyama K."/>
            <person name="Oono Y."/>
            <person name="Muramatsu M."/>
            <person name="Hayashizaki Y."/>
            <person name="Kawai J."/>
            <person name="Carninci P."/>
            <person name="Itoh M."/>
            <person name="Ishii Y."/>
            <person name="Arakawa T."/>
            <person name="Shibata K."/>
            <person name="Shinagawa A."/>
            <person name="Shinozaki K."/>
        </authorList>
    </citation>
    <scope>NUCLEOTIDE SEQUENCE [LARGE SCALE MRNA]</scope>
    <source>
        <strain>cv. Columbia</strain>
    </source>
</reference>
<reference key="4">
    <citation type="journal article" date="2003" name="Science">
        <title>Empirical analysis of transcriptional activity in the Arabidopsis genome.</title>
        <authorList>
            <person name="Yamada K."/>
            <person name="Lim J."/>
            <person name="Dale J.M."/>
            <person name="Chen H."/>
            <person name="Shinn P."/>
            <person name="Palm C.J."/>
            <person name="Southwick A.M."/>
            <person name="Wu H.C."/>
            <person name="Kim C.J."/>
            <person name="Nguyen M."/>
            <person name="Pham P.K."/>
            <person name="Cheuk R.F."/>
            <person name="Karlin-Newmann G."/>
            <person name="Liu S.X."/>
            <person name="Lam B."/>
            <person name="Sakano H."/>
            <person name="Wu T."/>
            <person name="Yu G."/>
            <person name="Miranda M."/>
            <person name="Quach H.L."/>
            <person name="Tripp M."/>
            <person name="Chang C.H."/>
            <person name="Lee J.M."/>
            <person name="Toriumi M.J."/>
            <person name="Chan M.M."/>
            <person name="Tang C.C."/>
            <person name="Onodera C.S."/>
            <person name="Deng J.M."/>
            <person name="Akiyama K."/>
            <person name="Ansari Y."/>
            <person name="Arakawa T."/>
            <person name="Banh J."/>
            <person name="Banno F."/>
            <person name="Bowser L."/>
            <person name="Brooks S.Y."/>
            <person name="Carninci P."/>
            <person name="Chao Q."/>
            <person name="Choy N."/>
            <person name="Enju A."/>
            <person name="Goldsmith A.D."/>
            <person name="Gurjal M."/>
            <person name="Hansen N.F."/>
            <person name="Hayashizaki Y."/>
            <person name="Johnson-Hopson C."/>
            <person name="Hsuan V.W."/>
            <person name="Iida K."/>
            <person name="Karnes M."/>
            <person name="Khan S."/>
            <person name="Koesema E."/>
            <person name="Ishida J."/>
            <person name="Jiang P.X."/>
            <person name="Jones T."/>
            <person name="Kawai J."/>
            <person name="Kamiya A."/>
            <person name="Meyers C."/>
            <person name="Nakajima M."/>
            <person name="Narusaka M."/>
            <person name="Seki M."/>
            <person name="Sakurai T."/>
            <person name="Satou M."/>
            <person name="Tamse R."/>
            <person name="Vaysberg M."/>
            <person name="Wallender E.K."/>
            <person name="Wong C."/>
            <person name="Yamamura Y."/>
            <person name="Yuan S."/>
            <person name="Shinozaki K."/>
            <person name="Davis R.W."/>
            <person name="Theologis A."/>
            <person name="Ecker J.R."/>
        </authorList>
    </citation>
    <scope>NUCLEOTIDE SEQUENCE [LARGE SCALE MRNA]</scope>
    <source>
        <strain>cv. Columbia</strain>
    </source>
</reference>
<reference key="5">
    <citation type="journal article" date="2015" name="BMC Plant Biol.">
        <title>Conservation of tRNA and rRNA 5-methylcytosine in the kingdom Plantae.</title>
        <authorList>
            <person name="Burgess A.L."/>
            <person name="David R."/>
            <person name="Searle I.R."/>
        </authorList>
    </citation>
    <scope>FUNCTION</scope>
    <scope>DISRUPTION PHENOTYPE</scope>
    <scope>CATALYTIC ACTIVITY</scope>
    <source>
        <strain>cv. Columbia</strain>
    </source>
</reference>
<reference key="6">
    <citation type="journal article" date="2017" name="BMC Plant Biol.">
        <title>Identification of tRNA nucleoside modification genes critical for stress response and development in rice and Arabidopsis.</title>
        <authorList>
            <person name="Wang Y."/>
            <person name="Pang C."/>
            <person name="Li X."/>
            <person name="Hu Z."/>
            <person name="Lv Z."/>
            <person name="Zheng B."/>
            <person name="Chen P."/>
        </authorList>
    </citation>
    <scope>GENE FAMILY</scope>
    <scope>NOMENCLATURE</scope>
</reference>
<accession>Q8GYE8</accession>
<proteinExistence type="evidence at protein level"/>
<protein>
    <recommendedName>
        <fullName evidence="4">25S rRNA (cytosine-C(5))-methyltransferase NSUN5</fullName>
        <ecNumber evidence="1 3">2.1.1.-</ecNumber>
    </recommendedName>
    <alternativeName>
        <fullName evidence="5">tRNA methyltransferase 4h</fullName>
        <shortName evidence="5">AtTRM4h</shortName>
    </alternativeName>
</protein>